<organism>
    <name type="scientific">Photobacterium profundum (strain SS9)</name>
    <dbReference type="NCBI Taxonomy" id="298386"/>
    <lineage>
        <taxon>Bacteria</taxon>
        <taxon>Pseudomonadati</taxon>
        <taxon>Pseudomonadota</taxon>
        <taxon>Gammaproteobacteria</taxon>
        <taxon>Vibrionales</taxon>
        <taxon>Vibrionaceae</taxon>
        <taxon>Photobacterium</taxon>
    </lineage>
</organism>
<proteinExistence type="inferred from homology"/>
<keyword id="KW-0028">Amino-acid biosynthesis</keyword>
<keyword id="KW-0100">Branched-chain amino acid biosynthesis</keyword>
<keyword id="KW-0963">Cytoplasm</keyword>
<keyword id="KW-0432">Leucine biosynthesis</keyword>
<keyword id="KW-0464">Manganese</keyword>
<keyword id="KW-0479">Metal-binding</keyword>
<keyword id="KW-1185">Reference proteome</keyword>
<keyword id="KW-0808">Transferase</keyword>
<dbReference type="EC" id="2.3.3.13" evidence="1"/>
<dbReference type="EMBL" id="CR378664">
    <property type="protein sequence ID" value="CAG18851.1"/>
    <property type="molecule type" value="Genomic_DNA"/>
</dbReference>
<dbReference type="RefSeq" id="WP_011217208.1">
    <property type="nucleotide sequence ID" value="NC_006370.1"/>
</dbReference>
<dbReference type="SMR" id="Q6LV24"/>
<dbReference type="STRING" id="298386.PBPRA0419"/>
<dbReference type="KEGG" id="ppr:PBPRA0419"/>
<dbReference type="eggNOG" id="COG0119">
    <property type="taxonomic scope" value="Bacteria"/>
</dbReference>
<dbReference type="HOGENOM" id="CLU_022158_0_1_6"/>
<dbReference type="UniPathway" id="UPA00048">
    <property type="reaction ID" value="UER00070"/>
</dbReference>
<dbReference type="Proteomes" id="UP000000593">
    <property type="component" value="Chromosome 1"/>
</dbReference>
<dbReference type="GO" id="GO:0005829">
    <property type="term" value="C:cytosol"/>
    <property type="evidence" value="ECO:0007669"/>
    <property type="project" value="TreeGrafter"/>
</dbReference>
<dbReference type="GO" id="GO:0003852">
    <property type="term" value="F:2-isopropylmalate synthase activity"/>
    <property type="evidence" value="ECO:0007669"/>
    <property type="project" value="UniProtKB-UniRule"/>
</dbReference>
<dbReference type="GO" id="GO:0003985">
    <property type="term" value="F:acetyl-CoA C-acetyltransferase activity"/>
    <property type="evidence" value="ECO:0007669"/>
    <property type="project" value="UniProtKB-UniRule"/>
</dbReference>
<dbReference type="GO" id="GO:0030145">
    <property type="term" value="F:manganese ion binding"/>
    <property type="evidence" value="ECO:0007669"/>
    <property type="project" value="UniProtKB-UniRule"/>
</dbReference>
<dbReference type="GO" id="GO:0009098">
    <property type="term" value="P:L-leucine biosynthetic process"/>
    <property type="evidence" value="ECO:0007669"/>
    <property type="project" value="UniProtKB-UniRule"/>
</dbReference>
<dbReference type="CDD" id="cd07940">
    <property type="entry name" value="DRE_TIM_IPMS"/>
    <property type="match status" value="1"/>
</dbReference>
<dbReference type="FunFam" id="1.10.238.260:FF:000001">
    <property type="entry name" value="2-isopropylmalate synthase"/>
    <property type="match status" value="1"/>
</dbReference>
<dbReference type="FunFam" id="3.20.20.70:FF:000010">
    <property type="entry name" value="2-isopropylmalate synthase"/>
    <property type="match status" value="1"/>
</dbReference>
<dbReference type="FunFam" id="3.30.160.270:FF:000001">
    <property type="entry name" value="2-isopropylmalate synthase"/>
    <property type="match status" value="1"/>
</dbReference>
<dbReference type="Gene3D" id="1.10.238.260">
    <property type="match status" value="1"/>
</dbReference>
<dbReference type="Gene3D" id="3.30.160.270">
    <property type="match status" value="1"/>
</dbReference>
<dbReference type="Gene3D" id="3.20.20.70">
    <property type="entry name" value="Aldolase class I"/>
    <property type="match status" value="1"/>
</dbReference>
<dbReference type="HAMAP" id="MF_01025">
    <property type="entry name" value="LeuA_type1"/>
    <property type="match status" value="1"/>
</dbReference>
<dbReference type="InterPro" id="IPR050073">
    <property type="entry name" value="2-IPM_HCS-like"/>
</dbReference>
<dbReference type="InterPro" id="IPR013709">
    <property type="entry name" value="2-isopropylmalate_synth_dimer"/>
</dbReference>
<dbReference type="InterPro" id="IPR002034">
    <property type="entry name" value="AIPM/Hcit_synth_CS"/>
</dbReference>
<dbReference type="InterPro" id="IPR013785">
    <property type="entry name" value="Aldolase_TIM"/>
</dbReference>
<dbReference type="InterPro" id="IPR054691">
    <property type="entry name" value="LeuA/HCS_post-cat"/>
</dbReference>
<dbReference type="InterPro" id="IPR036230">
    <property type="entry name" value="LeuA_allosteric_dom_sf"/>
</dbReference>
<dbReference type="InterPro" id="IPR005671">
    <property type="entry name" value="LeuA_bact_synth"/>
</dbReference>
<dbReference type="InterPro" id="IPR000891">
    <property type="entry name" value="PYR_CT"/>
</dbReference>
<dbReference type="NCBIfam" id="TIGR00973">
    <property type="entry name" value="leuA_bact"/>
    <property type="match status" value="1"/>
</dbReference>
<dbReference type="NCBIfam" id="NF002084">
    <property type="entry name" value="PRK00915.1-1"/>
    <property type="match status" value="1"/>
</dbReference>
<dbReference type="NCBIfam" id="NF002086">
    <property type="entry name" value="PRK00915.1-3"/>
    <property type="match status" value="1"/>
</dbReference>
<dbReference type="PANTHER" id="PTHR10277:SF9">
    <property type="entry name" value="2-ISOPROPYLMALATE SYNTHASE 1, CHLOROPLASTIC-RELATED"/>
    <property type="match status" value="1"/>
</dbReference>
<dbReference type="PANTHER" id="PTHR10277">
    <property type="entry name" value="HOMOCITRATE SYNTHASE-RELATED"/>
    <property type="match status" value="1"/>
</dbReference>
<dbReference type="Pfam" id="PF22617">
    <property type="entry name" value="HCS_D2"/>
    <property type="match status" value="1"/>
</dbReference>
<dbReference type="Pfam" id="PF00682">
    <property type="entry name" value="HMGL-like"/>
    <property type="match status" value="1"/>
</dbReference>
<dbReference type="Pfam" id="PF08502">
    <property type="entry name" value="LeuA_dimer"/>
    <property type="match status" value="1"/>
</dbReference>
<dbReference type="SMART" id="SM00917">
    <property type="entry name" value="LeuA_dimer"/>
    <property type="match status" value="1"/>
</dbReference>
<dbReference type="SUPFAM" id="SSF110921">
    <property type="entry name" value="2-isopropylmalate synthase LeuA, allosteric (dimerisation) domain"/>
    <property type="match status" value="1"/>
</dbReference>
<dbReference type="SUPFAM" id="SSF51569">
    <property type="entry name" value="Aldolase"/>
    <property type="match status" value="1"/>
</dbReference>
<dbReference type="PROSITE" id="PS00815">
    <property type="entry name" value="AIPM_HOMOCIT_SYNTH_1"/>
    <property type="match status" value="1"/>
</dbReference>
<dbReference type="PROSITE" id="PS00816">
    <property type="entry name" value="AIPM_HOMOCIT_SYNTH_2"/>
    <property type="match status" value="1"/>
</dbReference>
<dbReference type="PROSITE" id="PS50991">
    <property type="entry name" value="PYR_CT"/>
    <property type="match status" value="1"/>
</dbReference>
<feature type="chain" id="PRO_1000149235" description="2-isopropylmalate synthase">
    <location>
        <begin position="1"/>
        <end position="514"/>
    </location>
</feature>
<feature type="domain" description="Pyruvate carboxyltransferase" evidence="1">
    <location>
        <begin position="5"/>
        <end position="267"/>
    </location>
</feature>
<feature type="region of interest" description="Regulatory domain" evidence="1">
    <location>
        <begin position="392"/>
        <end position="514"/>
    </location>
</feature>
<feature type="binding site" evidence="1">
    <location>
        <position position="14"/>
    </location>
    <ligand>
        <name>Mn(2+)</name>
        <dbReference type="ChEBI" id="CHEBI:29035"/>
    </ligand>
</feature>
<feature type="binding site" evidence="1">
    <location>
        <position position="202"/>
    </location>
    <ligand>
        <name>Mn(2+)</name>
        <dbReference type="ChEBI" id="CHEBI:29035"/>
    </ligand>
</feature>
<feature type="binding site" evidence="1">
    <location>
        <position position="204"/>
    </location>
    <ligand>
        <name>Mn(2+)</name>
        <dbReference type="ChEBI" id="CHEBI:29035"/>
    </ligand>
</feature>
<feature type="binding site" evidence="1">
    <location>
        <position position="238"/>
    </location>
    <ligand>
        <name>Mn(2+)</name>
        <dbReference type="ChEBI" id="CHEBI:29035"/>
    </ligand>
</feature>
<protein>
    <recommendedName>
        <fullName evidence="1">2-isopropylmalate synthase</fullName>
        <ecNumber evidence="1">2.3.3.13</ecNumber>
    </recommendedName>
    <alternativeName>
        <fullName evidence="1">Alpha-IPM synthase</fullName>
    </alternativeName>
    <alternativeName>
        <fullName evidence="1">Alpha-isopropylmalate synthase</fullName>
    </alternativeName>
</protein>
<accession>Q6LV24</accession>
<name>LEU1_PHOPR</name>
<comment type="function">
    <text evidence="1">Catalyzes the condensation of the acetyl group of acetyl-CoA with 3-methyl-2-oxobutanoate (2-ketoisovalerate) to form 3-carboxy-3-hydroxy-4-methylpentanoate (2-isopropylmalate).</text>
</comment>
<comment type="catalytic activity">
    <reaction evidence="1">
        <text>3-methyl-2-oxobutanoate + acetyl-CoA + H2O = (2S)-2-isopropylmalate + CoA + H(+)</text>
        <dbReference type="Rhea" id="RHEA:21524"/>
        <dbReference type="ChEBI" id="CHEBI:1178"/>
        <dbReference type="ChEBI" id="CHEBI:11851"/>
        <dbReference type="ChEBI" id="CHEBI:15377"/>
        <dbReference type="ChEBI" id="CHEBI:15378"/>
        <dbReference type="ChEBI" id="CHEBI:57287"/>
        <dbReference type="ChEBI" id="CHEBI:57288"/>
        <dbReference type="EC" id="2.3.3.13"/>
    </reaction>
</comment>
<comment type="cofactor">
    <cofactor evidence="1">
        <name>Mn(2+)</name>
        <dbReference type="ChEBI" id="CHEBI:29035"/>
    </cofactor>
</comment>
<comment type="pathway">
    <text evidence="1">Amino-acid biosynthesis; L-leucine biosynthesis; L-leucine from 3-methyl-2-oxobutanoate: step 1/4.</text>
</comment>
<comment type="subunit">
    <text evidence="1">Homodimer.</text>
</comment>
<comment type="subcellular location">
    <subcellularLocation>
        <location evidence="1">Cytoplasm</location>
    </subcellularLocation>
</comment>
<comment type="similarity">
    <text evidence="1">Belongs to the alpha-IPM synthase/homocitrate synthase family. LeuA type 1 subfamily.</text>
</comment>
<reference key="1">
    <citation type="journal article" date="2005" name="Science">
        <title>Life at depth: Photobacterium profundum genome sequence and expression analysis.</title>
        <authorList>
            <person name="Vezzi A."/>
            <person name="Campanaro S."/>
            <person name="D'Angelo M."/>
            <person name="Simonato F."/>
            <person name="Vitulo N."/>
            <person name="Lauro F.M."/>
            <person name="Cestaro A."/>
            <person name="Malacrida G."/>
            <person name="Simionati B."/>
            <person name="Cannata N."/>
            <person name="Romualdi C."/>
            <person name="Bartlett D.H."/>
            <person name="Valle G."/>
        </authorList>
    </citation>
    <scope>NUCLEOTIDE SEQUENCE [LARGE SCALE GENOMIC DNA]</scope>
    <source>
        <strain>ATCC BAA-1253 / SS9</strain>
    </source>
</reference>
<evidence type="ECO:0000255" key="1">
    <source>
        <dbReference type="HAMAP-Rule" id="MF_01025"/>
    </source>
</evidence>
<gene>
    <name evidence="1" type="primary">leuA</name>
    <name type="ordered locus">PBPRA0419</name>
</gene>
<sequence>MKDQVIIFDTTLRDGEQALSASLTVKEKLQIAYALERLGVDVIEAGFPISSPGDFESVQTIAKHIKNSRVCALSRAVAKDIDVAAESLKVAEAFRIHTFISTSTIHVQDKLRRSYDDVIEMAIAAVKRARNYTDDVEFSCEDAGRTPIDNLCRMVEAAINAGARTINIPDTVGYTLPSEFGGIVAQLFNRVPNIDKAIISVHCHDDLGMSVANSMAAVQAGARQVEGTINGLGERAGNCSLEEIAMIIKTRSDFLGVETNIKHEEIHRTSKMVSQLCNMPIQANKAIVGANAFNHSSGIHQDGMIKNKNTYEIMTPESIGLKSQALNLTSRSGRAAVKNHMDTLGYIDGDYNLDTLYADFLKLADRKGQVFDYDLEALMYFANLRDEDDFFKLNYLSVQSGSIMATTSIKLQCGDEEKCEAAVGNGPVDALYQCIYRLTGYEIALDKFDLTAKGEGEDGLGQADIIANYKGRKYHGTGLATDIVEASGQALLHVINSIYRADQIAEIKERIATV</sequence>